<evidence type="ECO:0000250" key="1"/>
<evidence type="ECO:0000250" key="2">
    <source>
        <dbReference type="UniProtKB" id="P31723"/>
    </source>
</evidence>
<evidence type="ECO:0000250" key="3">
    <source>
        <dbReference type="UniProtKB" id="P32906"/>
    </source>
</evidence>
<evidence type="ECO:0000255" key="4"/>
<evidence type="ECO:0000269" key="5">
    <source>
    </source>
</evidence>
<evidence type="ECO:0000305" key="6"/>
<evidence type="ECO:0007744" key="7">
    <source>
        <dbReference type="PDB" id="1NXC"/>
    </source>
</evidence>
<evidence type="ECO:0007829" key="8">
    <source>
        <dbReference type="PDB" id="1NXC"/>
    </source>
</evidence>
<evidence type="ECO:0007829" key="9">
    <source>
        <dbReference type="PDB" id="5KKB"/>
    </source>
</evidence>
<organism>
    <name type="scientific">Mus musculus</name>
    <name type="common">Mouse</name>
    <dbReference type="NCBI Taxonomy" id="10090"/>
    <lineage>
        <taxon>Eukaryota</taxon>
        <taxon>Metazoa</taxon>
        <taxon>Chordata</taxon>
        <taxon>Craniata</taxon>
        <taxon>Vertebrata</taxon>
        <taxon>Euteleostomi</taxon>
        <taxon>Mammalia</taxon>
        <taxon>Eutheria</taxon>
        <taxon>Euarchontoglires</taxon>
        <taxon>Glires</taxon>
        <taxon>Rodentia</taxon>
        <taxon>Myomorpha</taxon>
        <taxon>Muroidea</taxon>
        <taxon>Muridae</taxon>
        <taxon>Murinae</taxon>
        <taxon>Mus</taxon>
        <taxon>Mus</taxon>
    </lineage>
</organism>
<reference key="1">
    <citation type="journal article" date="1994" name="J. Biol. Chem.">
        <title>Isolation and expression of murine and rabbit cDNAs encoding an alpha 1,2-mannosidase involved in the processing of asparagine-linked oligosaccharides.</title>
        <authorList>
            <person name="Lal A."/>
            <person name="Schutzbach J.S."/>
            <person name="Forsee W.T."/>
            <person name="Neame P.J."/>
            <person name="Moremen K.W."/>
        </authorList>
    </citation>
    <scope>NUCLEOTIDE SEQUENCE [MRNA]</scope>
    <source>
        <strain>BALB/cJ</strain>
    </source>
</reference>
<reference key="2">
    <citation type="journal article" date="2004" name="Genome Res.">
        <title>The status, quality, and expansion of the NIH full-length cDNA project: the Mammalian Gene Collection (MGC).</title>
        <authorList>
            <consortium name="The MGC Project Team"/>
        </authorList>
    </citation>
    <scope>NUCLEOTIDE SEQUENCE [LARGE SCALE MRNA]</scope>
    <source>
        <strain>FVB/N</strain>
        <tissue>Kidney</tissue>
    </source>
</reference>
<reference key="3">
    <citation type="submission" date="2009-01" db="UniProtKB">
        <authorList>
            <person name="Lubec G."/>
            <person name="Sunyer B."/>
            <person name="Chen W.-Q."/>
        </authorList>
    </citation>
    <scope>PROTEIN SEQUENCE OF 424-437</scope>
    <scope>IDENTIFICATION BY MASS SPECTROMETRY</scope>
    <source>
        <strain>OF1</strain>
        <tissue>Hippocampus</tissue>
    </source>
</reference>
<reference key="4">
    <citation type="journal article" date="2010" name="Cell">
        <title>A tissue-specific atlas of mouse protein phosphorylation and expression.</title>
        <authorList>
            <person name="Huttlin E.L."/>
            <person name="Jedrychowski M.P."/>
            <person name="Elias J.E."/>
            <person name="Goswami T."/>
            <person name="Rad R."/>
            <person name="Beausoleil S.A."/>
            <person name="Villen J."/>
            <person name="Haas W."/>
            <person name="Sowa M.E."/>
            <person name="Gygi S.P."/>
        </authorList>
    </citation>
    <scope>IDENTIFICATION BY MASS SPECTROMETRY [LARGE SCALE ANALYSIS]</scope>
    <source>
        <tissue>Liver</tissue>
        <tissue>Pancreas</tissue>
        <tissue>Spleen</tissue>
    </source>
</reference>
<reference evidence="7" key="5">
    <citation type="journal article" date="2004" name="J. Biol. Chem.">
        <title>Structure of mouse Golgi alpha-mannosidase IA reveals the molecular basis for substrate specificity among class 1 (family 47 glycosylhydrolase) alpha1,2-mannosidases.</title>
        <authorList>
            <person name="Tempel W."/>
            <person name="Karaveg K."/>
            <person name="Liu Z.-J."/>
            <person name="Rose J."/>
            <person name="Wang B.C."/>
            <person name="Moremen K.W."/>
        </authorList>
    </citation>
    <scope>X-RAY CRYSTALLOGRAPHY (1.51 ANGSTROMS) OF 178-655</scope>
    <scope>DISULFIDE BOND</scope>
    <scope>CALCIUM-BINDING SITE</scope>
    <scope>GLYCOSYLATION AT ASN-515</scope>
</reference>
<feature type="chain" id="PRO_0000210309" description="Mannosyl-oligosaccharide 1,2-alpha-mannosidase IA">
    <location>
        <begin position="1"/>
        <end position="655"/>
    </location>
</feature>
<feature type="topological domain" description="Cytoplasmic" evidence="4">
    <location>
        <begin position="1"/>
        <end position="43"/>
    </location>
</feature>
<feature type="transmembrane region" description="Helical; Signal-anchor for type II membrane protein" evidence="4">
    <location>
        <begin position="44"/>
        <end position="64"/>
    </location>
</feature>
<feature type="topological domain" description="Lumenal" evidence="4">
    <location>
        <begin position="65"/>
        <end position="655"/>
    </location>
</feature>
<feature type="active site" description="Proton donor" evidence="2">
    <location>
        <position position="524"/>
    </location>
</feature>
<feature type="binding site" evidence="5 7">
    <location>
        <position position="635"/>
    </location>
    <ligand>
        <name>Ca(2+)</name>
        <dbReference type="ChEBI" id="CHEBI:29108"/>
    </ligand>
</feature>
<feature type="glycosylation site" description="N-linked (GlcNAc...) asparagine" evidence="5 7">
    <location>
        <position position="515"/>
    </location>
</feature>
<feature type="disulfide bond" evidence="5 7">
    <location>
        <begin position="478"/>
        <end position="510"/>
    </location>
</feature>
<feature type="helix" evidence="8">
    <location>
        <begin position="192"/>
        <end position="216"/>
    </location>
</feature>
<feature type="strand" evidence="8">
    <location>
        <begin position="219"/>
        <end position="223"/>
    </location>
</feature>
<feature type="turn" evidence="8">
    <location>
        <begin position="224"/>
        <end position="227"/>
    </location>
</feature>
<feature type="strand" evidence="8">
    <location>
        <begin position="228"/>
        <end position="230"/>
    </location>
</feature>
<feature type="helix" evidence="8">
    <location>
        <begin position="233"/>
        <end position="235"/>
    </location>
</feature>
<feature type="helix" evidence="8">
    <location>
        <begin position="241"/>
        <end position="252"/>
    </location>
</feature>
<feature type="helix" evidence="8">
    <location>
        <begin position="256"/>
        <end position="269"/>
    </location>
</feature>
<feature type="strand" evidence="8">
    <location>
        <begin position="275"/>
        <end position="279"/>
    </location>
</feature>
<feature type="helix" evidence="8">
    <location>
        <begin position="280"/>
        <end position="298"/>
    </location>
</feature>
<feature type="helix" evidence="8">
    <location>
        <begin position="301"/>
        <end position="314"/>
    </location>
</feature>
<feature type="helix" evidence="8">
    <location>
        <begin position="315"/>
        <end position="318"/>
    </location>
</feature>
<feature type="strand" evidence="8">
    <location>
        <begin position="320"/>
        <end position="323"/>
    </location>
</feature>
<feature type="strand" evidence="8">
    <location>
        <begin position="327"/>
        <end position="330"/>
    </location>
</feature>
<feature type="turn" evidence="8">
    <location>
        <begin position="331"/>
        <end position="333"/>
    </location>
</feature>
<feature type="strand" evidence="9">
    <location>
        <begin position="335"/>
        <end position="337"/>
    </location>
</feature>
<feature type="helix" evidence="8">
    <location>
        <begin position="343"/>
        <end position="345"/>
    </location>
</feature>
<feature type="helix" evidence="8">
    <location>
        <begin position="349"/>
        <end position="352"/>
    </location>
</feature>
<feature type="helix" evidence="8">
    <location>
        <begin position="356"/>
        <end position="366"/>
    </location>
</feature>
<feature type="helix" evidence="8">
    <location>
        <begin position="370"/>
        <end position="384"/>
    </location>
</feature>
<feature type="helix" evidence="8">
    <location>
        <begin position="388"/>
        <end position="390"/>
    </location>
</feature>
<feature type="strand" evidence="8">
    <location>
        <begin position="394"/>
        <end position="396"/>
    </location>
</feature>
<feature type="turn" evidence="8">
    <location>
        <begin position="398"/>
        <end position="400"/>
    </location>
</feature>
<feature type="turn" evidence="8">
    <location>
        <begin position="412"/>
        <end position="414"/>
    </location>
</feature>
<feature type="helix" evidence="8">
    <location>
        <begin position="415"/>
        <end position="427"/>
    </location>
</feature>
<feature type="turn" evidence="8">
    <location>
        <begin position="428"/>
        <end position="430"/>
    </location>
</feature>
<feature type="helix" evidence="8">
    <location>
        <begin position="433"/>
        <end position="449"/>
    </location>
</feature>
<feature type="strand" evidence="8">
    <location>
        <begin position="451"/>
        <end position="453"/>
    </location>
</feature>
<feature type="strand" evidence="8">
    <location>
        <begin position="459"/>
        <end position="461"/>
    </location>
</feature>
<feature type="strand" evidence="8">
    <location>
        <begin position="463"/>
        <end position="465"/>
    </location>
</feature>
<feature type="strand" evidence="8">
    <location>
        <begin position="468"/>
        <end position="470"/>
    </location>
</feature>
<feature type="strand" evidence="8">
    <location>
        <begin position="472"/>
        <end position="474"/>
    </location>
</feature>
<feature type="helix" evidence="8">
    <location>
        <begin position="476"/>
        <end position="479"/>
    </location>
</feature>
<feature type="helix" evidence="8">
    <location>
        <begin position="480"/>
        <end position="486"/>
    </location>
</feature>
<feature type="turn" evidence="9">
    <location>
        <begin position="487"/>
        <end position="490"/>
    </location>
</feature>
<feature type="helix" evidence="8">
    <location>
        <begin position="496"/>
        <end position="515"/>
    </location>
</feature>
<feature type="strand" evidence="8">
    <location>
        <begin position="517"/>
        <end position="521"/>
    </location>
</feature>
<feature type="strand" evidence="8">
    <location>
        <begin position="524"/>
        <end position="529"/>
    </location>
</feature>
<feature type="strand" evidence="8">
    <location>
        <begin position="533"/>
        <end position="535"/>
    </location>
</feature>
<feature type="helix" evidence="8">
    <location>
        <begin position="539"/>
        <end position="541"/>
    </location>
</feature>
<feature type="helix" evidence="8">
    <location>
        <begin position="549"/>
        <end position="561"/>
    </location>
</feature>
<feature type="helix" evidence="8">
    <location>
        <begin position="564"/>
        <end position="580"/>
    </location>
</feature>
<feature type="strand" evidence="8">
    <location>
        <begin position="595"/>
        <end position="597"/>
    </location>
</feature>
<feature type="helix" evidence="8">
    <location>
        <begin position="606"/>
        <end position="610"/>
    </location>
</feature>
<feature type="helix" evidence="8">
    <location>
        <begin position="612"/>
        <end position="619"/>
    </location>
</feature>
<feature type="turn" evidence="8">
    <location>
        <begin position="628"/>
        <end position="630"/>
    </location>
</feature>
<feature type="strand" evidence="8">
    <location>
        <begin position="631"/>
        <end position="633"/>
    </location>
</feature>
<feature type="strand" evidence="8">
    <location>
        <begin position="639"/>
        <end position="641"/>
    </location>
</feature>
<dbReference type="EC" id="3.2.1.113" evidence="3"/>
<dbReference type="EMBL" id="U04299">
    <property type="protein sequence ID" value="AAA17747.1"/>
    <property type="molecule type" value="mRNA"/>
</dbReference>
<dbReference type="EMBL" id="BC015265">
    <property type="protein sequence ID" value="AAH15265.1"/>
    <property type="molecule type" value="mRNA"/>
</dbReference>
<dbReference type="CCDS" id="CCDS23848.1"/>
<dbReference type="PIR" id="A54408">
    <property type="entry name" value="A54408"/>
</dbReference>
<dbReference type="RefSeq" id="NP_032574.1">
    <property type="nucleotide sequence ID" value="NM_008548.4"/>
</dbReference>
<dbReference type="RefSeq" id="XP_006512632.1">
    <property type="nucleotide sequence ID" value="XM_006512569.3"/>
</dbReference>
<dbReference type="PDB" id="1NXC">
    <property type="method" value="X-ray"/>
    <property type="resolution" value="1.51 A"/>
    <property type="chains" value="A=178-655"/>
</dbReference>
<dbReference type="PDB" id="5KKB">
    <property type="method" value="X-ray"/>
    <property type="resolution" value="1.77 A"/>
    <property type="chains" value="A/B=176-644"/>
</dbReference>
<dbReference type="PDBsum" id="1NXC"/>
<dbReference type="PDBsum" id="5KKB"/>
<dbReference type="SMR" id="P45700"/>
<dbReference type="FunCoup" id="P45700">
    <property type="interactions" value="3937"/>
</dbReference>
<dbReference type="STRING" id="10090.ENSMUSP00000003843"/>
<dbReference type="CAZy" id="GH47">
    <property type="family name" value="Glycoside Hydrolase Family 47"/>
</dbReference>
<dbReference type="GlyCosmos" id="P45700">
    <property type="glycosylation" value="1 site, No reported glycans"/>
</dbReference>
<dbReference type="GlyGen" id="P45700">
    <property type="glycosylation" value="1 site, 1 N-linked glycan (1 site)"/>
</dbReference>
<dbReference type="iPTMnet" id="P45700"/>
<dbReference type="PhosphoSitePlus" id="P45700"/>
<dbReference type="jPOST" id="P45700"/>
<dbReference type="PaxDb" id="10090-ENSMUSP00000003843"/>
<dbReference type="PeptideAtlas" id="P45700"/>
<dbReference type="ProteomicsDB" id="291989"/>
<dbReference type="Pumba" id="P45700"/>
<dbReference type="Antibodypedia" id="32605">
    <property type="antibodies" value="80 antibodies from 19 providers"/>
</dbReference>
<dbReference type="DNASU" id="17155"/>
<dbReference type="Ensembl" id="ENSMUST00000003843.16">
    <property type="protein sequence ID" value="ENSMUSP00000003843.9"/>
    <property type="gene ID" value="ENSMUSG00000003746.17"/>
</dbReference>
<dbReference type="Ensembl" id="ENSMUST00000105470.9">
    <property type="protein sequence ID" value="ENSMUSP00000101110.2"/>
    <property type="gene ID" value="ENSMUSG00000003746.17"/>
</dbReference>
<dbReference type="GeneID" id="17155"/>
<dbReference type="KEGG" id="mmu:17155"/>
<dbReference type="UCSC" id="uc007fbw.1">
    <property type="organism name" value="mouse"/>
</dbReference>
<dbReference type="AGR" id="MGI:104677"/>
<dbReference type="CTD" id="17155"/>
<dbReference type="MGI" id="MGI:104677">
    <property type="gene designation" value="Man1a"/>
</dbReference>
<dbReference type="VEuPathDB" id="HostDB:ENSMUSG00000003746"/>
<dbReference type="eggNOG" id="KOG2204">
    <property type="taxonomic scope" value="Eukaryota"/>
</dbReference>
<dbReference type="GeneTree" id="ENSGT00940000158188"/>
<dbReference type="HOGENOM" id="CLU_003818_3_2_1"/>
<dbReference type="InParanoid" id="P45700"/>
<dbReference type="OMA" id="WRMFKNI"/>
<dbReference type="OrthoDB" id="8118055at2759"/>
<dbReference type="PhylomeDB" id="P45700"/>
<dbReference type="TreeFam" id="TF313420"/>
<dbReference type="BRENDA" id="3.2.1.113">
    <property type="organism ID" value="3474"/>
</dbReference>
<dbReference type="BRENDA" id="3.2.1.209">
    <property type="organism ID" value="3474"/>
</dbReference>
<dbReference type="Reactome" id="R-MMU-964827">
    <property type="pathway name" value="Progressive trimming of alpha-1,2-linked mannose residues from Man9/8/7GlcNAc2 to produce Man5GlcNAc2"/>
</dbReference>
<dbReference type="UniPathway" id="UPA00378"/>
<dbReference type="BioGRID-ORCS" id="17155">
    <property type="hits" value="3 hits in 77 CRISPR screens"/>
</dbReference>
<dbReference type="ChiTaRS" id="Man1a">
    <property type="organism name" value="mouse"/>
</dbReference>
<dbReference type="EvolutionaryTrace" id="P45700"/>
<dbReference type="PRO" id="PR:P45700"/>
<dbReference type="Proteomes" id="UP000000589">
    <property type="component" value="Chromosome 10"/>
</dbReference>
<dbReference type="RNAct" id="P45700">
    <property type="molecule type" value="protein"/>
</dbReference>
<dbReference type="Bgee" id="ENSMUSG00000003746">
    <property type="expression patterns" value="Expressed in parotid gland and 285 other cell types or tissues"/>
</dbReference>
<dbReference type="ExpressionAtlas" id="P45700">
    <property type="expression patterns" value="baseline and differential"/>
</dbReference>
<dbReference type="GO" id="GO:0031410">
    <property type="term" value="C:cytoplasmic vesicle"/>
    <property type="evidence" value="ECO:0007669"/>
    <property type="project" value="Ensembl"/>
</dbReference>
<dbReference type="GO" id="GO:0005829">
    <property type="term" value="C:cytosol"/>
    <property type="evidence" value="ECO:0007669"/>
    <property type="project" value="Ensembl"/>
</dbReference>
<dbReference type="GO" id="GO:0005793">
    <property type="term" value="C:endoplasmic reticulum-Golgi intermediate compartment"/>
    <property type="evidence" value="ECO:0007669"/>
    <property type="project" value="Ensembl"/>
</dbReference>
<dbReference type="GO" id="GO:0000139">
    <property type="term" value="C:Golgi membrane"/>
    <property type="evidence" value="ECO:0000314"/>
    <property type="project" value="MGI"/>
</dbReference>
<dbReference type="GO" id="GO:0005509">
    <property type="term" value="F:calcium ion binding"/>
    <property type="evidence" value="ECO:0007669"/>
    <property type="project" value="InterPro"/>
</dbReference>
<dbReference type="GO" id="GO:0004571">
    <property type="term" value="F:mannosyl-oligosaccharide 1,2-alpha-mannosidase activity"/>
    <property type="evidence" value="ECO:0007669"/>
    <property type="project" value="UniProtKB-EC"/>
</dbReference>
<dbReference type="GO" id="GO:0005975">
    <property type="term" value="P:carbohydrate metabolic process"/>
    <property type="evidence" value="ECO:0007669"/>
    <property type="project" value="InterPro"/>
</dbReference>
<dbReference type="GO" id="GO:0036503">
    <property type="term" value="P:ERAD pathway"/>
    <property type="evidence" value="ECO:0007669"/>
    <property type="project" value="Ensembl"/>
</dbReference>
<dbReference type="GO" id="GO:0006486">
    <property type="term" value="P:protein glycosylation"/>
    <property type="evidence" value="ECO:0007669"/>
    <property type="project" value="UniProtKB-UniPathway"/>
</dbReference>
<dbReference type="GO" id="GO:0045047">
    <property type="term" value="P:protein targeting to ER"/>
    <property type="evidence" value="ECO:0007669"/>
    <property type="project" value="Ensembl"/>
</dbReference>
<dbReference type="FunFam" id="1.50.10.10:FF:000002">
    <property type="entry name" value="alpha-1,2-Mannosidase"/>
    <property type="match status" value="1"/>
</dbReference>
<dbReference type="Gene3D" id="1.50.10.10">
    <property type="match status" value="1"/>
</dbReference>
<dbReference type="InterPro" id="IPR012341">
    <property type="entry name" value="6hp_glycosidase-like_sf"/>
</dbReference>
<dbReference type="InterPro" id="IPR001382">
    <property type="entry name" value="Glyco_hydro_47"/>
</dbReference>
<dbReference type="InterPro" id="IPR050749">
    <property type="entry name" value="Glycosyl_Hydrolase_47"/>
</dbReference>
<dbReference type="InterPro" id="IPR036026">
    <property type="entry name" value="Seven-hairpin_glycosidases"/>
</dbReference>
<dbReference type="PANTHER" id="PTHR11742:SF31">
    <property type="entry name" value="MANNOSYL-OLIGOSACCHARIDE 1,2-ALPHA-MANNOSIDASE IA"/>
    <property type="match status" value="1"/>
</dbReference>
<dbReference type="PANTHER" id="PTHR11742">
    <property type="entry name" value="MANNOSYL-OLIGOSACCHARIDE ALPHA-1,2-MANNOSIDASE-RELATED"/>
    <property type="match status" value="1"/>
</dbReference>
<dbReference type="Pfam" id="PF01532">
    <property type="entry name" value="Glyco_hydro_47"/>
    <property type="match status" value="1"/>
</dbReference>
<dbReference type="PRINTS" id="PR00747">
    <property type="entry name" value="GLYHDRLASE47"/>
</dbReference>
<dbReference type="SUPFAM" id="SSF48225">
    <property type="entry name" value="Seven-hairpin glycosidases"/>
    <property type="match status" value="1"/>
</dbReference>
<name>MA1A1_MOUSE</name>
<keyword id="KW-0002">3D-structure</keyword>
<keyword id="KW-0106">Calcium</keyword>
<keyword id="KW-0903">Direct protein sequencing</keyword>
<keyword id="KW-1015">Disulfide bond</keyword>
<keyword id="KW-0325">Glycoprotein</keyword>
<keyword id="KW-0326">Glycosidase</keyword>
<keyword id="KW-0333">Golgi apparatus</keyword>
<keyword id="KW-0378">Hydrolase</keyword>
<keyword id="KW-0472">Membrane</keyword>
<keyword id="KW-0479">Metal-binding</keyword>
<keyword id="KW-1185">Reference proteome</keyword>
<keyword id="KW-0735">Signal-anchor</keyword>
<keyword id="KW-0812">Transmembrane</keyword>
<keyword id="KW-1133">Transmembrane helix</keyword>
<protein>
    <recommendedName>
        <fullName>Mannosyl-oligosaccharide 1,2-alpha-mannosidase IA</fullName>
        <ecNumber evidence="3">3.2.1.113</ecNumber>
    </recommendedName>
    <alternativeName>
        <fullName>Man(9)-alpha-mannosidase</fullName>
        <shortName>Man9-mannosidase</shortName>
    </alternativeName>
    <alternativeName>
        <fullName>Mannosidase alpha class 1A member 1</fullName>
    </alternativeName>
    <alternativeName>
        <fullName>Processing alpha-1,2-mannosidase IA</fullName>
        <shortName>Alpha-1,2-mannosidase IA</shortName>
    </alternativeName>
</protein>
<comment type="function">
    <text>Involved in the maturation of Asn-linked oligosaccharides. Progressively trim alpha-1,2-linked mannose residues from Man(9)GlcNAc(2) to produce Man(5)GlcNAc(2).</text>
</comment>
<comment type="catalytic activity">
    <reaction evidence="3">
        <text>N(4)-(alpha-D-Man-(1-&gt;2)-alpha-D-Man-(1-&gt;2)-alpha-D-Man-(1-&gt;3)-[alpha-D-Man-(1-&gt;2)-alpha-D-Man-(1-&gt;3)-[alpha-D-Man-(1-&gt;2)-alpha-D-Man-(1-&gt;6)]-alpha-D-Man-(1-&gt;6)]-beta-D-Man-(1-&gt;4)-beta-D-GlcNAc-(1-&gt;4)-beta-D-GlcNAc)-L-asparaginyl-[protein] (N-glucan mannose isomer 9A1,2,3B1,2,3) + 4 H2O = N(4)-(alpha-D-Man-(1-&gt;3)-[alpha-D-Man-(1-&gt;3)-[alpha-D-Man-(1-&gt;6)]-alpha-D-Man-(1-&gt;6)]-beta-D-Man-(1-&gt;4)-beta-D-GlcNAc-(1-&gt;4)-beta-D-GlcNAc)-L-asparaginyl-[protein] (N-glucan mannose isomer 5A1,2) + 4 beta-D-mannose</text>
        <dbReference type="Rhea" id="RHEA:56008"/>
        <dbReference type="Rhea" id="RHEA-COMP:14356"/>
        <dbReference type="Rhea" id="RHEA-COMP:14367"/>
        <dbReference type="ChEBI" id="CHEBI:15377"/>
        <dbReference type="ChEBI" id="CHEBI:28563"/>
        <dbReference type="ChEBI" id="CHEBI:59087"/>
        <dbReference type="ChEBI" id="CHEBI:139493"/>
        <dbReference type="EC" id="3.2.1.113"/>
    </reaction>
</comment>
<comment type="catalytic activity">
    <reaction evidence="3">
        <text>N(4)-(alpha-D-Man-(1-&gt;2)-alpha-D-Man-(1-&gt;2)-alpha-D-Man-(1-&gt;3)-[alpha-D-Man-(1-&gt;3)-[alpha-D-Man-(1-&gt;2)-alpha-D-Man-(1-&gt;6)]-alpha-D-Man-(1-&gt;6)]-beta-D-Man-(1-&gt;4)-beta-D-GlcNAc-(1-&gt;4)-beta-D-GlcNAc)-L-asparaginyl-[protein] (N-glucan mannose isomer 8A1,2,3B1,3) + 3 H2O = N(4)-(alpha-D-Man-(1-&gt;3)-[alpha-D-Man-(1-&gt;3)-[alpha-D-Man-(1-&gt;6)]-alpha-D-Man-(1-&gt;6)]-beta-D-Man-(1-&gt;4)-beta-D-GlcNAc-(1-&gt;4)-beta-D-GlcNAc)-L-asparaginyl-[protein] (N-glucan mannose isomer 5A1,2) + 3 beta-D-mannose</text>
        <dbReference type="Rhea" id="RHEA:56028"/>
        <dbReference type="Rhea" id="RHEA-COMP:14358"/>
        <dbReference type="Rhea" id="RHEA-COMP:14367"/>
        <dbReference type="ChEBI" id="CHEBI:15377"/>
        <dbReference type="ChEBI" id="CHEBI:28563"/>
        <dbReference type="ChEBI" id="CHEBI:59087"/>
        <dbReference type="ChEBI" id="CHEBI:60628"/>
        <dbReference type="EC" id="3.2.1.113"/>
    </reaction>
</comment>
<comment type="cofactor">
    <cofactor evidence="5">
        <name>Ca(2+)</name>
        <dbReference type="ChEBI" id="CHEBI:29108"/>
    </cofactor>
</comment>
<comment type="activity regulation">
    <text evidence="1">Inhibited by both 1-deoxymannojirimycin and kifunensine.</text>
</comment>
<comment type="pathway">
    <text evidence="3">Protein modification; protein glycosylation.</text>
</comment>
<comment type="subcellular location">
    <subcellularLocation>
        <location>Golgi apparatus membrane</location>
        <topology>Single-pass type II membrane protein</topology>
    </subcellularLocation>
</comment>
<comment type="PTM">
    <text evidence="5">N-linked glycan at Asn-515 consists of Man(6)-GlcNAc(2).</text>
</comment>
<comment type="similarity">
    <text evidence="6">Belongs to the glycosyl hydrolase 47 family.</text>
</comment>
<proteinExistence type="evidence at protein level"/>
<sequence>MPVGGLLPLFSSPGGGGLGSGLGGGLGGGRKGSGPAAFRLTEKFVLLLVFSAFITLCFGAIFFLPDSSKLLSGVLFHSNPALQPPAEHKPGLGARAEDAAEGRVRHREEGAPGDPGAGLEDNLARIRENHERALREAKETLQKLPEEIQRDILLEKEKVAQDQLRDKDLFRGLPKVDFLPPVGVENREPADATIREKRAKIKEMMTHAWNNYKRYAWGLNELKPISKEGHSSSLFGNIKGATIVDALDTLFIMGMKTEFQEAKSWIKKYLDFNVNAEVSVFEVNIRFVGGLLSAYYLSGEEIFRKKAVELGVKLLPAFHTPSGIPWALLNMKSGIGRNWPWASGGSSILAEFGTLHLEFMHLSHLSGDPVFAEKVMKIRTVLNKLDKPEGLYPNYLNPSSGQWGQHHVSVGGLGDSFYEYLLKAWLMSDKTDLEAKKMYFDAVQAIETHLIRKSSGGLTYIAEWKGGLLEHKMGHLTCFAGGMFALGADGAPEARAQHYLELGAEIARTCHESYNRTYVKLGPEAFRFDGGVEAIATRQNEKYYILRPEVIETYMYMWRLTHDPKYRTWAWEAVEALESHCRVNGGYSGLRDVYIARESYDDVQQSFFLAETLKYLYLIFSDDDLLPLEHWIFNTEAHPFPILREQKKEIDGKEK</sequence>
<accession>P45700</accession>
<gene>
    <name type="primary">Man1a1</name>
    <name type="synonym">Man1a</name>
</gene>